<protein>
    <recommendedName>
        <fullName evidence="1">DNA-directed RNA polymerase subunit beta</fullName>
        <shortName evidence="1">RNAP subunit beta</shortName>
        <ecNumber evidence="1">2.7.7.6</ecNumber>
    </recommendedName>
    <alternativeName>
        <fullName evidence="1">RNA polymerase subunit beta</fullName>
    </alternativeName>
    <alternativeName>
        <fullName evidence="1">Transcriptase subunit beta</fullName>
    </alternativeName>
</protein>
<gene>
    <name evidence="1" type="primary">rpoB</name>
    <name type="ordered locus">MW0497</name>
</gene>
<reference key="1">
    <citation type="journal article" date="2002" name="Lancet">
        <title>Genome and virulence determinants of high virulence community-acquired MRSA.</title>
        <authorList>
            <person name="Baba T."/>
            <person name="Takeuchi F."/>
            <person name="Kuroda M."/>
            <person name="Yuzawa H."/>
            <person name="Aoki K."/>
            <person name="Oguchi A."/>
            <person name="Nagai Y."/>
            <person name="Iwama N."/>
            <person name="Asano K."/>
            <person name="Naimi T."/>
            <person name="Kuroda H."/>
            <person name="Cui L."/>
            <person name="Yamamoto K."/>
            <person name="Hiramatsu K."/>
        </authorList>
    </citation>
    <scope>NUCLEOTIDE SEQUENCE [LARGE SCALE GENOMIC DNA]</scope>
    <source>
        <strain>MW2</strain>
    </source>
</reference>
<comment type="function">
    <text evidence="1">DNA-dependent RNA polymerase catalyzes the transcription of DNA into RNA using the four ribonucleoside triphosphates as substrates.</text>
</comment>
<comment type="catalytic activity">
    <reaction evidence="1">
        <text>RNA(n) + a ribonucleoside 5'-triphosphate = RNA(n+1) + diphosphate</text>
        <dbReference type="Rhea" id="RHEA:21248"/>
        <dbReference type="Rhea" id="RHEA-COMP:14527"/>
        <dbReference type="Rhea" id="RHEA-COMP:17342"/>
        <dbReference type="ChEBI" id="CHEBI:33019"/>
        <dbReference type="ChEBI" id="CHEBI:61557"/>
        <dbReference type="ChEBI" id="CHEBI:140395"/>
        <dbReference type="EC" id="2.7.7.6"/>
    </reaction>
</comment>
<comment type="subunit">
    <text evidence="1">The RNAP catalytic core consists of 2 alpha, 1 beta, 1 beta' and 1 omega subunit. When a sigma factor is associated with the core the holoenzyme is formed, which can initiate transcription.</text>
</comment>
<comment type="similarity">
    <text evidence="1">Belongs to the RNA polymerase beta chain family.</text>
</comment>
<keyword id="KW-0240">DNA-directed RNA polymerase</keyword>
<keyword id="KW-0548">Nucleotidyltransferase</keyword>
<keyword id="KW-0804">Transcription</keyword>
<keyword id="KW-0808">Transferase</keyword>
<accession>P60279</accession>
<accession>Q99W65</accession>
<evidence type="ECO:0000255" key="1">
    <source>
        <dbReference type="HAMAP-Rule" id="MF_01321"/>
    </source>
</evidence>
<proteinExistence type="inferred from homology"/>
<dbReference type="EC" id="2.7.7.6" evidence="1"/>
<dbReference type="EMBL" id="BA000033">
    <property type="protein sequence ID" value="BAB94362.1"/>
    <property type="molecule type" value="Genomic_DNA"/>
</dbReference>
<dbReference type="RefSeq" id="WP_000918667.1">
    <property type="nucleotide sequence ID" value="NC_003923.1"/>
</dbReference>
<dbReference type="SMR" id="P60279"/>
<dbReference type="KEGG" id="sam:MW0497"/>
<dbReference type="HOGENOM" id="CLU_000524_4_1_9"/>
<dbReference type="GO" id="GO:0000428">
    <property type="term" value="C:DNA-directed RNA polymerase complex"/>
    <property type="evidence" value="ECO:0007669"/>
    <property type="project" value="UniProtKB-KW"/>
</dbReference>
<dbReference type="GO" id="GO:0003677">
    <property type="term" value="F:DNA binding"/>
    <property type="evidence" value="ECO:0007669"/>
    <property type="project" value="UniProtKB-UniRule"/>
</dbReference>
<dbReference type="GO" id="GO:0003899">
    <property type="term" value="F:DNA-directed RNA polymerase activity"/>
    <property type="evidence" value="ECO:0007669"/>
    <property type="project" value="UniProtKB-UniRule"/>
</dbReference>
<dbReference type="GO" id="GO:0032549">
    <property type="term" value="F:ribonucleoside binding"/>
    <property type="evidence" value="ECO:0007669"/>
    <property type="project" value="InterPro"/>
</dbReference>
<dbReference type="GO" id="GO:0006351">
    <property type="term" value="P:DNA-templated transcription"/>
    <property type="evidence" value="ECO:0007669"/>
    <property type="project" value="UniProtKB-UniRule"/>
</dbReference>
<dbReference type="CDD" id="cd00653">
    <property type="entry name" value="RNA_pol_B_RPB2"/>
    <property type="match status" value="1"/>
</dbReference>
<dbReference type="FunFam" id="3.90.1800.10:FF:000001">
    <property type="entry name" value="DNA-directed RNA polymerase subunit beta"/>
    <property type="match status" value="1"/>
</dbReference>
<dbReference type="Gene3D" id="2.40.50.100">
    <property type="match status" value="1"/>
</dbReference>
<dbReference type="Gene3D" id="2.40.50.150">
    <property type="match status" value="1"/>
</dbReference>
<dbReference type="Gene3D" id="3.90.1100.10">
    <property type="match status" value="3"/>
</dbReference>
<dbReference type="Gene3D" id="2.40.270.10">
    <property type="entry name" value="DNA-directed RNA polymerase, subunit 2, domain 6"/>
    <property type="match status" value="1"/>
</dbReference>
<dbReference type="Gene3D" id="3.90.1800.10">
    <property type="entry name" value="RNA polymerase alpha subunit dimerisation domain"/>
    <property type="match status" value="1"/>
</dbReference>
<dbReference type="Gene3D" id="3.90.1110.10">
    <property type="entry name" value="RNA polymerase Rpb2, domain 2"/>
    <property type="match status" value="1"/>
</dbReference>
<dbReference type="HAMAP" id="MF_01321">
    <property type="entry name" value="RNApol_bact_RpoB"/>
    <property type="match status" value="1"/>
</dbReference>
<dbReference type="InterPro" id="IPR019462">
    <property type="entry name" value="DNA-dir_RNA_pol_bsu_external_1"/>
</dbReference>
<dbReference type="InterPro" id="IPR015712">
    <property type="entry name" value="DNA-dir_RNA_pol_su2"/>
</dbReference>
<dbReference type="InterPro" id="IPR007120">
    <property type="entry name" value="DNA-dir_RNAP_su2_dom"/>
</dbReference>
<dbReference type="InterPro" id="IPR037033">
    <property type="entry name" value="DNA-dir_RNAP_su2_hyb_sf"/>
</dbReference>
<dbReference type="InterPro" id="IPR010243">
    <property type="entry name" value="RNA_pol_bsu_bac"/>
</dbReference>
<dbReference type="InterPro" id="IPR007121">
    <property type="entry name" value="RNA_pol_bsu_CS"/>
</dbReference>
<dbReference type="InterPro" id="IPR007644">
    <property type="entry name" value="RNA_pol_bsu_protrusion"/>
</dbReference>
<dbReference type="InterPro" id="IPR007642">
    <property type="entry name" value="RNA_pol_Rpb2_2"/>
</dbReference>
<dbReference type="InterPro" id="IPR037034">
    <property type="entry name" value="RNA_pol_Rpb2_2_sf"/>
</dbReference>
<dbReference type="InterPro" id="IPR007645">
    <property type="entry name" value="RNA_pol_Rpb2_3"/>
</dbReference>
<dbReference type="InterPro" id="IPR007641">
    <property type="entry name" value="RNA_pol_Rpb2_7"/>
</dbReference>
<dbReference type="InterPro" id="IPR014724">
    <property type="entry name" value="RNA_pol_RPB2_OB-fold"/>
</dbReference>
<dbReference type="NCBIfam" id="NF001616">
    <property type="entry name" value="PRK00405.1"/>
    <property type="match status" value="1"/>
</dbReference>
<dbReference type="NCBIfam" id="TIGR02013">
    <property type="entry name" value="rpoB"/>
    <property type="match status" value="1"/>
</dbReference>
<dbReference type="PANTHER" id="PTHR20856">
    <property type="entry name" value="DNA-DIRECTED RNA POLYMERASE I SUBUNIT 2"/>
    <property type="match status" value="1"/>
</dbReference>
<dbReference type="Pfam" id="PF04563">
    <property type="entry name" value="RNA_pol_Rpb2_1"/>
    <property type="match status" value="1"/>
</dbReference>
<dbReference type="Pfam" id="PF04561">
    <property type="entry name" value="RNA_pol_Rpb2_2"/>
    <property type="match status" value="2"/>
</dbReference>
<dbReference type="Pfam" id="PF04565">
    <property type="entry name" value="RNA_pol_Rpb2_3"/>
    <property type="match status" value="1"/>
</dbReference>
<dbReference type="Pfam" id="PF10385">
    <property type="entry name" value="RNA_pol_Rpb2_45"/>
    <property type="match status" value="1"/>
</dbReference>
<dbReference type="Pfam" id="PF00562">
    <property type="entry name" value="RNA_pol_Rpb2_6"/>
    <property type="match status" value="1"/>
</dbReference>
<dbReference type="Pfam" id="PF04560">
    <property type="entry name" value="RNA_pol_Rpb2_7"/>
    <property type="match status" value="1"/>
</dbReference>
<dbReference type="SUPFAM" id="SSF64484">
    <property type="entry name" value="beta and beta-prime subunits of DNA dependent RNA-polymerase"/>
    <property type="match status" value="1"/>
</dbReference>
<dbReference type="PROSITE" id="PS01166">
    <property type="entry name" value="RNA_POL_BETA"/>
    <property type="match status" value="1"/>
</dbReference>
<feature type="chain" id="PRO_0000047963" description="DNA-directed RNA polymerase subunit beta">
    <location>
        <begin position="1"/>
        <end position="1183"/>
    </location>
</feature>
<name>RPOB_STAAW</name>
<sequence>MAGQVVQYGRHRKRRNYARISEVLELPNLIEIQTKSYEWFLREGLIEMFRDISPIEDFTGNLSLEFVDYRLGEPKYDLEESKNRDATYAAPLRVKVRLIIKETGEVKEQEVFMGDFPLMTDTGTFVINGAERVIVSQLVRSPSVYFNEKIDKNGRENYDATIIPNRGAWLEYETDAKDVVYVRIDRTRKLPLTVLLRALGFSSDQEIVDLLGDNEYLRNTLEKDGTENTEQALLEIYERLRPGEPPTVENAKSLLYSRFFDPKRYDLASVGRYKTNKKLHLKHRLFNQKLAEPIVNTETGEIVVEEGTVLDRRKIDEIMDVLESNANSEVFELHGSVIDEPVEIQSIKVYVPNDDEGRTTTVIGNAFPDSEVKCITPADIIASMSYFFNLLSGIGYTDDIDHLGNRRLRSVGELLQNQFRIGLSRMERVVRERMSIQDTESITPQQLINIRPVIASIKEFFGSSQLSQFMDQANPLAELTHKRRLSALGPGGLTRERAQMEVRDVHYSHYGRMCPIETPEGPNIGLINSLSSYARVNEFGFIETPYRKVDLDTHAITDQIDYLTADEEDSYVVAQANSKLDENGRFMDDEVVCRFRGNNTVMAKEKMDYMDVSPKQVVSAATACIPFLENDDSNRALMGANMQRQAVPLMNPEAPFVGTGMEHVAARDSGAAITAKHRGRVEHVESNEILVRRLVEENGVEHEGELDRYPLAKFKRSNSGTCYNQRPIVAVGDVVEYNEILADGPSMELGEMALGRNVVVGFMTWDGYNYEDAVIMSERLVKDDVYTSIHIEEYESEARDTKLGPEEITRDIPNVSESALKNLDDRGIVYIGAEVKDGDILVGKVTPKGVTELTAEERLLHAIFGEKAREVRDTSLRVPHGAGGIVLDVKVFNREEGDDTLSPGVNQLVRVYIVQKRKIHVGDKMCGRHGNKGVISKIVPEEDMPYLPDGRPIDIMLNPLGVPSRMNIGQVLELHLGMAAKNLGIHVASPVFDGANDDDVWSTIEEAGMARDGKTVLYDGRTGEPFDNRISVGVMYMLKLAHMVDDKLHARSTGPYSLVTQQPLGGKAQFGGQRFGEMEVWALEAYGAAYTLQEILTYKSDDTVGRVKTYEAIVKGENISRPSVPESFRVLMKELQSLGLDVKVMDEQDNEIEMTDVDDDDVVERKVDLQQNDAPETQKEVTD</sequence>
<organism>
    <name type="scientific">Staphylococcus aureus (strain MW2)</name>
    <dbReference type="NCBI Taxonomy" id="196620"/>
    <lineage>
        <taxon>Bacteria</taxon>
        <taxon>Bacillati</taxon>
        <taxon>Bacillota</taxon>
        <taxon>Bacilli</taxon>
        <taxon>Bacillales</taxon>
        <taxon>Staphylococcaceae</taxon>
        <taxon>Staphylococcus</taxon>
    </lineage>
</organism>